<keyword id="KW-0479">Metal-binding</keyword>
<keyword id="KW-1185">Reference proteome</keyword>
<organism>
    <name type="scientific">Deinococcus radiodurans (strain ATCC 13939 / DSM 20539 / JCM 16871 / CCUG 27074 / LMG 4051 / NBRC 15346 / NCIMB 9279 / VKM B-1422 / R1)</name>
    <dbReference type="NCBI Taxonomy" id="243230"/>
    <lineage>
        <taxon>Bacteria</taxon>
        <taxon>Thermotogati</taxon>
        <taxon>Deinococcota</taxon>
        <taxon>Deinococci</taxon>
        <taxon>Deinococcales</taxon>
        <taxon>Deinococcaceae</taxon>
        <taxon>Deinococcus</taxon>
    </lineage>
</organism>
<gene>
    <name type="ordered locus">DR_0110</name>
</gene>
<evidence type="ECO:0000250" key="1">
    <source>
        <dbReference type="UniProtKB" id="P0AFP6"/>
    </source>
</evidence>
<evidence type="ECO:0000305" key="2"/>
<feature type="chain" id="PRO_0000147306" description="GTP cyclohydrolase 1 type 2 homolog">
    <location>
        <begin position="1"/>
        <end position="263"/>
    </location>
</feature>
<feature type="binding site" evidence="1">
    <location>
        <position position="76"/>
    </location>
    <ligand>
        <name>a divalent metal cation</name>
        <dbReference type="ChEBI" id="CHEBI:60240"/>
        <label>1</label>
    </ligand>
</feature>
<feature type="binding site" evidence="1">
    <location>
        <position position="77"/>
    </location>
    <ligand>
        <name>a divalent metal cation</name>
        <dbReference type="ChEBI" id="CHEBI:60240"/>
        <label>2</label>
    </ligand>
</feature>
<feature type="binding site" evidence="1">
    <location>
        <position position="113"/>
    </location>
    <ligand>
        <name>a divalent metal cation</name>
        <dbReference type="ChEBI" id="CHEBI:60240"/>
        <label>1</label>
    </ligand>
</feature>
<feature type="binding site" evidence="1">
    <location>
        <position position="231"/>
    </location>
    <ligand>
        <name>a divalent metal cation</name>
        <dbReference type="ChEBI" id="CHEBI:60240"/>
        <label>2</label>
    </ligand>
</feature>
<feature type="binding site" evidence="1">
    <location>
        <position position="235"/>
    </location>
    <ligand>
        <name>a divalent metal cation</name>
        <dbReference type="ChEBI" id="CHEBI:60240"/>
        <label>1</label>
    </ligand>
</feature>
<feature type="binding site" evidence="1">
    <location>
        <position position="235"/>
    </location>
    <ligand>
        <name>a divalent metal cation</name>
        <dbReference type="ChEBI" id="CHEBI:60240"/>
        <label>2</label>
    </ligand>
</feature>
<proteinExistence type="inferred from homology"/>
<protein>
    <recommendedName>
        <fullName>GTP cyclohydrolase 1 type 2 homolog</fullName>
    </recommendedName>
</protein>
<accession>Q9RY41</accession>
<reference key="1">
    <citation type="journal article" date="1999" name="Science">
        <title>Genome sequence of the radioresistant bacterium Deinococcus radiodurans R1.</title>
        <authorList>
            <person name="White O."/>
            <person name="Eisen J.A."/>
            <person name="Heidelberg J.F."/>
            <person name="Hickey E.K."/>
            <person name="Peterson J.D."/>
            <person name="Dodson R.J."/>
            <person name="Haft D.H."/>
            <person name="Gwinn M.L."/>
            <person name="Nelson W.C."/>
            <person name="Richardson D.L."/>
            <person name="Moffat K.S."/>
            <person name="Qin H."/>
            <person name="Jiang L."/>
            <person name="Pamphile W."/>
            <person name="Crosby M."/>
            <person name="Shen M."/>
            <person name="Vamathevan J.J."/>
            <person name="Lam P."/>
            <person name="McDonald L.A."/>
            <person name="Utterback T.R."/>
            <person name="Zalewski C."/>
            <person name="Makarova K.S."/>
            <person name="Aravind L."/>
            <person name="Daly M.J."/>
            <person name="Minton K.W."/>
            <person name="Fleischmann R.D."/>
            <person name="Ketchum K.A."/>
            <person name="Nelson K.E."/>
            <person name="Salzberg S.L."/>
            <person name="Smith H.O."/>
            <person name="Venter J.C."/>
            <person name="Fraser C.M."/>
        </authorList>
    </citation>
    <scope>NUCLEOTIDE SEQUENCE [LARGE SCALE GENOMIC DNA]</scope>
    <source>
        <strain>ATCC 13939 / DSM 20539 / JCM 16871 / CCUG 27074 / LMG 4051 / NBRC 15346 / NCIMB 9279 / VKM B-1422 / R1</strain>
    </source>
</reference>
<sequence>MTVSPSSQTGRGEIGRDELVRWLGEYLRIGAYPDPSLNGLQIQGTDKIRRIAASVDTSLQTLQAAAESGADLLLVHHGLFWGRPLAITGPHYERVRTAIQADLNLYAAHIPLDAHPEVGNNAMIARALSLTDLQPFGDWQGHKIGVAGTLPRELGLQDFADRIQKLTGEICLVHGGGSPNIHRVGVTSGSGAGAIAEAAAMGLDTLLTGEPEHKYFHDSFEYGVNVIFAGHYETEVFGVRALAARIEDEFGIPWQFLNFPTGL</sequence>
<name>GCH1L_DEIRA</name>
<comment type="subunit">
    <text evidence="1">Homohexamer.</text>
</comment>
<comment type="similarity">
    <text evidence="2">Belongs to the GTP cyclohydrolase I type 2/NIF3 family.</text>
</comment>
<comment type="sequence caution" evidence="2">
    <conflict type="erroneous initiation">
        <sequence resource="EMBL-CDS" id="AAF09697"/>
    </conflict>
</comment>
<dbReference type="EMBL" id="AE000513">
    <property type="protein sequence ID" value="AAF09697.1"/>
    <property type="status" value="ALT_INIT"/>
    <property type="molecule type" value="Genomic_DNA"/>
</dbReference>
<dbReference type="PIR" id="C75560">
    <property type="entry name" value="C75560"/>
</dbReference>
<dbReference type="RefSeq" id="NP_293836.1">
    <property type="nucleotide sequence ID" value="NC_001263.1"/>
</dbReference>
<dbReference type="RefSeq" id="WP_027480305.1">
    <property type="nucleotide sequence ID" value="NC_001263.1"/>
</dbReference>
<dbReference type="SMR" id="Q9RY41"/>
<dbReference type="STRING" id="243230.DR_0110"/>
<dbReference type="PaxDb" id="243230-DR_0110"/>
<dbReference type="EnsemblBacteria" id="AAF09697">
    <property type="protein sequence ID" value="AAF09697"/>
    <property type="gene ID" value="DR_0110"/>
</dbReference>
<dbReference type="GeneID" id="69516340"/>
<dbReference type="KEGG" id="dra:DR_0110"/>
<dbReference type="PATRIC" id="fig|243230.17.peg.275"/>
<dbReference type="eggNOG" id="COG0327">
    <property type="taxonomic scope" value="Bacteria"/>
</dbReference>
<dbReference type="HOGENOM" id="CLU_037423_3_0_0"/>
<dbReference type="InParanoid" id="Q9RY41"/>
<dbReference type="OrthoDB" id="9792792at2"/>
<dbReference type="Proteomes" id="UP000002524">
    <property type="component" value="Chromosome 1"/>
</dbReference>
<dbReference type="GO" id="GO:0005737">
    <property type="term" value="C:cytoplasm"/>
    <property type="evidence" value="ECO:0000318"/>
    <property type="project" value="GO_Central"/>
</dbReference>
<dbReference type="GO" id="GO:0046872">
    <property type="term" value="F:metal ion binding"/>
    <property type="evidence" value="ECO:0007669"/>
    <property type="project" value="UniProtKB-KW"/>
</dbReference>
<dbReference type="FunFam" id="3.40.1390.30:FF:000001">
    <property type="entry name" value="GTP cyclohydrolase 1 type 2"/>
    <property type="match status" value="1"/>
</dbReference>
<dbReference type="Gene3D" id="3.40.1390.30">
    <property type="entry name" value="NIF3 (NGG1p interacting factor 3)-like"/>
    <property type="match status" value="2"/>
</dbReference>
<dbReference type="InterPro" id="IPR002678">
    <property type="entry name" value="DUF34/NIF3"/>
</dbReference>
<dbReference type="InterPro" id="IPR036069">
    <property type="entry name" value="DUF34/NIF3_sf"/>
</dbReference>
<dbReference type="NCBIfam" id="TIGR00486">
    <property type="entry name" value="YbgI_SA1388"/>
    <property type="match status" value="1"/>
</dbReference>
<dbReference type="PANTHER" id="PTHR13799:SF14">
    <property type="entry name" value="GTP CYCLOHYDROLASE 1 TYPE 2 HOMOLOG"/>
    <property type="match status" value="1"/>
</dbReference>
<dbReference type="PANTHER" id="PTHR13799">
    <property type="entry name" value="NGG1 INTERACTING FACTOR 3"/>
    <property type="match status" value="1"/>
</dbReference>
<dbReference type="Pfam" id="PF01784">
    <property type="entry name" value="DUF34_NIF3"/>
    <property type="match status" value="1"/>
</dbReference>
<dbReference type="SUPFAM" id="SSF102705">
    <property type="entry name" value="NIF3 (NGG1p interacting factor 3)-like"/>
    <property type="match status" value="1"/>
</dbReference>